<organism>
    <name type="scientific">Yersinia pseudotuberculosis serotype IB (strain PB1/+)</name>
    <dbReference type="NCBI Taxonomy" id="502801"/>
    <lineage>
        <taxon>Bacteria</taxon>
        <taxon>Pseudomonadati</taxon>
        <taxon>Pseudomonadota</taxon>
        <taxon>Gammaproteobacteria</taxon>
        <taxon>Enterobacterales</taxon>
        <taxon>Yersiniaceae</taxon>
        <taxon>Yersinia</taxon>
    </lineage>
</organism>
<name>Y1506_YERPB</name>
<gene>
    <name type="ordered locus">YPTS_1506</name>
</gene>
<sequence>MSAYSRPVLLLLCGLLLFTISIAVLNTLVPLWLSHQQLPTWQVGMVSSSYFTGNLVGTLIAGRFIQQLGFNRSYHCSCILFALATCGLMLTVDFWSWLGWRFLAGIACALIWVIVESALLRSGTLTNRGQLLAAYMMVYYLGTVIGQLLLGIVSTQLLSVIPWVGALVITAMLPLLFAQFSHQSRHESPPIAVWPMLKRRSARLGINGCIISGVLLGSLYGLLPLYLSHKGMSDASVGGWMALLVSSGIIGQWPMGRMADRYGRLLVLRIQVFVVILGSVAILGNYAMAPALFILGCAGFTLYPVAMAWACEKASADELVAMNQALLMSYTLGSLAGPTMTSLLMQRYSDNLLFIMIAGVAFVYLMMLLRKPDHQQTPYAAV</sequence>
<evidence type="ECO:0000255" key="1">
    <source>
        <dbReference type="HAMAP-Rule" id="MF_01149"/>
    </source>
</evidence>
<comment type="subcellular location">
    <subcellularLocation>
        <location evidence="1">Cell inner membrane</location>
        <topology evidence="1">Multi-pass membrane protein</topology>
    </subcellularLocation>
</comment>
<comment type="similarity">
    <text evidence="1">Belongs to the major facilitator superfamily. YcaD (TC 2.A.1.26) family.</text>
</comment>
<proteinExistence type="inferred from homology"/>
<accession>B2KA13</accession>
<dbReference type="EMBL" id="CP001048">
    <property type="protein sequence ID" value="ACC88478.1"/>
    <property type="molecule type" value="Genomic_DNA"/>
</dbReference>
<dbReference type="RefSeq" id="WP_002211335.1">
    <property type="nucleotide sequence ID" value="NZ_CP009780.1"/>
</dbReference>
<dbReference type="SMR" id="B2KA13"/>
<dbReference type="KEGG" id="ypb:YPTS_1506"/>
<dbReference type="PATRIC" id="fig|502801.10.peg.870"/>
<dbReference type="GO" id="GO:0005886">
    <property type="term" value="C:plasma membrane"/>
    <property type="evidence" value="ECO:0007669"/>
    <property type="project" value="UniProtKB-SubCell"/>
</dbReference>
<dbReference type="GO" id="GO:0022857">
    <property type="term" value="F:transmembrane transporter activity"/>
    <property type="evidence" value="ECO:0007669"/>
    <property type="project" value="UniProtKB-UniRule"/>
</dbReference>
<dbReference type="CDD" id="cd17477">
    <property type="entry name" value="MFS_YcaD_like"/>
    <property type="match status" value="1"/>
</dbReference>
<dbReference type="FunFam" id="1.20.1250.20:FF:000041">
    <property type="entry name" value="Uncharacterized MFS-type transporter YcaD"/>
    <property type="match status" value="1"/>
</dbReference>
<dbReference type="FunFam" id="1.20.1250.20:FF:000066">
    <property type="entry name" value="Uncharacterized MFS-type transporter YcaD"/>
    <property type="match status" value="1"/>
</dbReference>
<dbReference type="Gene3D" id="1.20.1250.20">
    <property type="entry name" value="MFS general substrate transporter like domains"/>
    <property type="match status" value="2"/>
</dbReference>
<dbReference type="HAMAP" id="MF_01149">
    <property type="entry name" value="MFS_YcaD"/>
    <property type="match status" value="1"/>
</dbReference>
<dbReference type="InterPro" id="IPR011701">
    <property type="entry name" value="MFS"/>
</dbReference>
<dbReference type="InterPro" id="IPR020846">
    <property type="entry name" value="MFS_dom"/>
</dbReference>
<dbReference type="InterPro" id="IPR036259">
    <property type="entry name" value="MFS_trans_sf"/>
</dbReference>
<dbReference type="InterPro" id="IPR023745">
    <property type="entry name" value="MFS_YcaD"/>
</dbReference>
<dbReference type="InterPro" id="IPR047200">
    <property type="entry name" value="MFS_YcaD-like"/>
</dbReference>
<dbReference type="NCBIfam" id="NF002962">
    <property type="entry name" value="PRK03633.1"/>
    <property type="match status" value="1"/>
</dbReference>
<dbReference type="PANTHER" id="PTHR23521">
    <property type="entry name" value="TRANSPORTER MFS SUPERFAMILY"/>
    <property type="match status" value="1"/>
</dbReference>
<dbReference type="PANTHER" id="PTHR23521:SF2">
    <property type="entry name" value="TRANSPORTER MFS SUPERFAMILY"/>
    <property type="match status" value="1"/>
</dbReference>
<dbReference type="Pfam" id="PF07690">
    <property type="entry name" value="MFS_1"/>
    <property type="match status" value="1"/>
</dbReference>
<dbReference type="SUPFAM" id="SSF103473">
    <property type="entry name" value="MFS general substrate transporter"/>
    <property type="match status" value="1"/>
</dbReference>
<dbReference type="PROSITE" id="PS50850">
    <property type="entry name" value="MFS"/>
    <property type="match status" value="1"/>
</dbReference>
<protein>
    <recommendedName>
        <fullName evidence="1">Uncharacterized MFS-type transporter YPTS_1506</fullName>
    </recommendedName>
</protein>
<feature type="chain" id="PRO_1000137500" description="Uncharacterized MFS-type transporter YPTS_1506">
    <location>
        <begin position="1"/>
        <end position="382"/>
    </location>
</feature>
<feature type="transmembrane region" description="Helical" evidence="1">
    <location>
        <begin position="8"/>
        <end position="28"/>
    </location>
</feature>
<feature type="transmembrane region" description="Helical" evidence="1">
    <location>
        <begin position="41"/>
        <end position="61"/>
    </location>
</feature>
<feature type="transmembrane region" description="Helical" evidence="1">
    <location>
        <begin position="73"/>
        <end position="93"/>
    </location>
</feature>
<feature type="transmembrane region" description="Helical" evidence="1">
    <location>
        <begin position="94"/>
        <end position="114"/>
    </location>
</feature>
<feature type="transmembrane region" description="Helical" evidence="1">
    <location>
        <begin position="133"/>
        <end position="153"/>
    </location>
</feature>
<feature type="transmembrane region" description="Helical" evidence="1">
    <location>
        <begin position="157"/>
        <end position="177"/>
    </location>
</feature>
<feature type="transmembrane region" description="Helical" evidence="1">
    <location>
        <begin position="208"/>
        <end position="228"/>
    </location>
</feature>
<feature type="transmembrane region" description="Helical" evidence="1">
    <location>
        <begin position="235"/>
        <end position="255"/>
    </location>
</feature>
<feature type="transmembrane region" description="Helical" evidence="1">
    <location>
        <begin position="274"/>
        <end position="294"/>
    </location>
</feature>
<feature type="transmembrane region" description="Helical" evidence="1">
    <location>
        <begin position="325"/>
        <end position="345"/>
    </location>
</feature>
<feature type="transmembrane region" description="Helical" evidence="1">
    <location>
        <begin position="349"/>
        <end position="369"/>
    </location>
</feature>
<reference key="1">
    <citation type="submission" date="2008-04" db="EMBL/GenBank/DDBJ databases">
        <title>Complete sequence of Yersinia pseudotuberculosis PB1/+.</title>
        <authorList>
            <person name="Copeland A."/>
            <person name="Lucas S."/>
            <person name="Lapidus A."/>
            <person name="Glavina del Rio T."/>
            <person name="Dalin E."/>
            <person name="Tice H."/>
            <person name="Bruce D."/>
            <person name="Goodwin L."/>
            <person name="Pitluck S."/>
            <person name="Munk A.C."/>
            <person name="Brettin T."/>
            <person name="Detter J.C."/>
            <person name="Han C."/>
            <person name="Tapia R."/>
            <person name="Schmutz J."/>
            <person name="Larimer F."/>
            <person name="Land M."/>
            <person name="Hauser L."/>
            <person name="Challacombe J.F."/>
            <person name="Green L."/>
            <person name="Lindler L.E."/>
            <person name="Nikolich M.P."/>
            <person name="Richardson P."/>
        </authorList>
    </citation>
    <scope>NUCLEOTIDE SEQUENCE [LARGE SCALE GENOMIC DNA]</scope>
    <source>
        <strain>PB1/+</strain>
    </source>
</reference>
<keyword id="KW-0997">Cell inner membrane</keyword>
<keyword id="KW-1003">Cell membrane</keyword>
<keyword id="KW-0472">Membrane</keyword>
<keyword id="KW-0812">Transmembrane</keyword>
<keyword id="KW-1133">Transmembrane helix</keyword>
<keyword id="KW-0813">Transport</keyword>